<organism>
    <name type="scientific">Mus musculus</name>
    <name type="common">Mouse</name>
    <dbReference type="NCBI Taxonomy" id="10090"/>
    <lineage>
        <taxon>Eukaryota</taxon>
        <taxon>Metazoa</taxon>
        <taxon>Chordata</taxon>
        <taxon>Craniata</taxon>
        <taxon>Vertebrata</taxon>
        <taxon>Euteleostomi</taxon>
        <taxon>Mammalia</taxon>
        <taxon>Eutheria</taxon>
        <taxon>Euarchontoglires</taxon>
        <taxon>Glires</taxon>
        <taxon>Rodentia</taxon>
        <taxon>Myomorpha</taxon>
        <taxon>Muroidea</taxon>
        <taxon>Muridae</taxon>
        <taxon>Murinae</taxon>
        <taxon>Mus</taxon>
        <taxon>Mus</taxon>
    </lineage>
</organism>
<comment type="function">
    <molecule>Beta-1,4-galactosyltransferase 1</molecule>
    <text evidence="2">The Golgi complex form catalyzes the production of lactose in the lactating mammary gland and could also be responsible for the synthesis of complex-type N-linked oligosaccharides in many glycoproteins as well as the carbohydrate moieties of glycolipids.</text>
</comment>
<comment type="function">
    <molecule>Processed beta-1,4-galactosyltransferase 1</molecule>
    <text evidence="2">The cell surface form functions as a recognition molecule during a variety of cell to cell and cell to matrix interactions, as those occurring during development and egg fertilization, by binding to specific oligosaccharide ligands on opposing cells or in the extracellular matrix. The secreted form is responsible for the synthesis of complex-type to N-linked oligosaccharides in many glycoproteins as well as the carbohydrate moieties of glycolipids.</text>
</comment>
<comment type="catalytic activity">
    <reaction evidence="2">
        <text>D-glucose + UDP-alpha-D-galactose = lactose + UDP + H(+)</text>
        <dbReference type="Rhea" id="RHEA:12404"/>
        <dbReference type="ChEBI" id="CHEBI:4167"/>
        <dbReference type="ChEBI" id="CHEBI:15378"/>
        <dbReference type="ChEBI" id="CHEBI:17716"/>
        <dbReference type="ChEBI" id="CHEBI:58223"/>
        <dbReference type="ChEBI" id="CHEBI:66914"/>
        <dbReference type="EC" id="2.4.1.22"/>
    </reaction>
    <physiologicalReaction direction="left-to-right" evidence="2">
        <dbReference type="Rhea" id="RHEA:12405"/>
    </physiologicalReaction>
</comment>
<comment type="catalytic activity">
    <reaction evidence="2">
        <text>an N-acetyl-beta-D-glucosaminyl derivative + UDP-alpha-D-galactose = a beta-D-galactosyl-(1-&gt;4)-N-acetyl-beta-D-glucosaminyl derivative + UDP + H(+)</text>
        <dbReference type="Rhea" id="RHEA:22932"/>
        <dbReference type="ChEBI" id="CHEBI:15378"/>
        <dbReference type="ChEBI" id="CHEBI:58223"/>
        <dbReference type="ChEBI" id="CHEBI:61631"/>
        <dbReference type="ChEBI" id="CHEBI:66914"/>
        <dbReference type="ChEBI" id="CHEBI:133507"/>
        <dbReference type="EC" id="2.4.1.38"/>
    </reaction>
    <physiologicalReaction direction="left-to-right" evidence="2">
        <dbReference type="Rhea" id="RHEA:22933"/>
    </physiologicalReaction>
</comment>
<comment type="catalytic activity">
    <reaction evidence="2">
        <text>N-acetyl-D-glucosamine + UDP-alpha-D-galactose = beta-D-galactosyl-(1-&gt;4)-N-acetyl-D-glucosamine + UDP + H(+)</text>
        <dbReference type="Rhea" id="RHEA:17745"/>
        <dbReference type="ChEBI" id="CHEBI:15378"/>
        <dbReference type="ChEBI" id="CHEBI:58223"/>
        <dbReference type="ChEBI" id="CHEBI:60152"/>
        <dbReference type="ChEBI" id="CHEBI:66914"/>
        <dbReference type="ChEBI" id="CHEBI:506227"/>
        <dbReference type="EC" id="2.4.1.90"/>
    </reaction>
    <physiologicalReaction direction="left-to-right" evidence="2">
        <dbReference type="Rhea" id="RHEA:17746"/>
    </physiologicalReaction>
</comment>
<comment type="catalytic activity">
    <reaction evidence="2">
        <text>a beta-D-GlcNAc-(1-&gt;3)-beta-D-Gal-(1-&gt;4)-beta-D-Glc-(1&lt;-&gt;1)-Cer(d18:1(4E)) + UDP-alpha-D-galactose = a neolactoside nLc4Cer(d18:1(4E)) + UDP + H(+)</text>
        <dbReference type="Rhea" id="RHEA:31499"/>
        <dbReference type="ChEBI" id="CHEBI:15378"/>
        <dbReference type="ChEBI" id="CHEBI:17006"/>
        <dbReference type="ChEBI" id="CHEBI:17103"/>
        <dbReference type="ChEBI" id="CHEBI:58223"/>
        <dbReference type="ChEBI" id="CHEBI:66914"/>
        <dbReference type="EC" id="2.4.1.275"/>
    </reaction>
    <physiologicalReaction direction="left-to-right" evidence="2">
        <dbReference type="Rhea" id="RHEA:31500"/>
    </physiologicalReaction>
</comment>
<comment type="catalytic activity">
    <reaction evidence="2">
        <text>a beta-D-glucosylceramide + UDP-alpha-D-galactose = a beta-D-galactosyl-(1-&gt;4)-beta-D-glucosyl-(1&lt;-&gt;1)-ceramide + UDP + H(+)</text>
        <dbReference type="Rhea" id="RHEA:62552"/>
        <dbReference type="ChEBI" id="CHEBI:15378"/>
        <dbReference type="ChEBI" id="CHEBI:58223"/>
        <dbReference type="ChEBI" id="CHEBI:66914"/>
        <dbReference type="ChEBI" id="CHEBI:79208"/>
        <dbReference type="ChEBI" id="CHEBI:83264"/>
    </reaction>
    <physiologicalReaction direction="left-to-right" evidence="2">
        <dbReference type="Rhea" id="RHEA:62553"/>
    </physiologicalReaction>
</comment>
<comment type="catalytic activity">
    <reaction evidence="2">
        <text>a neolactoside IV(3)-beta-GlcNAc-nLc4Cer + UDP-alpha-D-galactose = a neolactoside nLc6Cer + UDP + H(+)</text>
        <dbReference type="Rhea" id="RHEA:62548"/>
        <dbReference type="ChEBI" id="CHEBI:15378"/>
        <dbReference type="ChEBI" id="CHEBI:58223"/>
        <dbReference type="ChEBI" id="CHEBI:66914"/>
        <dbReference type="ChEBI" id="CHEBI:90357"/>
        <dbReference type="ChEBI" id="CHEBI:144378"/>
    </reaction>
    <physiologicalReaction direction="left-to-right" evidence="2">
        <dbReference type="Rhea" id="RHEA:62549"/>
    </physiologicalReaction>
</comment>
<comment type="cofactor">
    <cofactor evidence="3">
        <name>Mn(2+)</name>
        <dbReference type="ChEBI" id="CHEBI:29035"/>
    </cofactor>
</comment>
<comment type="pathway">
    <text>Protein modification; protein glycosylation.</text>
</comment>
<comment type="subunit">
    <text evidence="3 7">Homodimer; and heterodimer with alpha-lactalbumin to form lactose synthase (By similarity). Interacts (via N-terminal cytoplasmic domain) with UBE2Q1 (via N-terminus); the interaction is direct (PubMed:18511602).</text>
</comment>
<comment type="subcellular location">
    <molecule>Isoform Long</molecule>
    <subcellularLocation>
        <location evidence="7">Golgi apparatus</location>
        <location evidence="7">Golgi stack membrane</location>
        <topology>Single-pass type II membrane protein</topology>
    </subcellularLocation>
    <subcellularLocation>
        <location>Cell membrane</location>
        <topology>Single-pass type II membrane protein</topology>
    </subcellularLocation>
    <subcellularLocation>
        <location>Cell surface</location>
    </subcellularLocation>
    <subcellularLocation>
        <location evidence="7">Cell projection</location>
        <location evidence="7">Filopodium</location>
    </subcellularLocation>
    <text evidence="7">Found in trans cisternae of Golgi. B4GALT1 cell surface expression is regulated by UBE2Q1 (PubMed:18511602).</text>
</comment>
<comment type="subcellular location">
    <molecule>Isoform Short</molecule>
    <subcellularLocation>
        <location evidence="8">Golgi apparatus</location>
        <location evidence="8">Golgi stack membrane</location>
        <topology evidence="8">Single-pass type II membrane protein</topology>
    </subcellularLocation>
    <text evidence="8">Found in trans cisternae of Golgi.</text>
</comment>
<comment type="subcellular location">
    <molecule>Processed beta-1,4-galactosyltransferase 1</molecule>
    <subcellularLocation>
        <location evidence="3">Secreted</location>
    </subcellularLocation>
    <text evidence="3">Soluble form found in body fluids.</text>
</comment>
<comment type="alternative products">
    <event type="alternative initiation"/>
    <isoform>
        <id>P15535-1</id>
        <name>Long</name>
        <name>Cell surface</name>
        <sequence type="displayed"/>
    </isoform>
    <isoform>
        <id>P15535-2</id>
        <name>Short</name>
        <name>Golgi complex</name>
        <sequence type="described" ref="VSP_018803"/>
    </isoform>
</comment>
<comment type="developmental stage">
    <text evidence="6">In the brain, highest levels of expression are found at 11.5 dpc with decreased expression thereafter.</text>
</comment>
<comment type="PTM">
    <text>The soluble form derives from the membrane forms by proteolytic processing.</text>
</comment>
<comment type="similarity">
    <text evidence="10">Belongs to the glycosyltransferase 7 family.</text>
</comment>
<comment type="online information" name="Functional Glycomics Gateway - GTase">
    <link uri="http://www.functionalglycomics.org/glycomics/molecule/jsp/glycoEnzyme/viewGlycoEnzyme.jsp?gbpId=gt_mou_460"/>
    <text>b4GalT1</text>
</comment>
<evidence type="ECO:0000250" key="1"/>
<evidence type="ECO:0000250" key="2">
    <source>
        <dbReference type="UniProtKB" id="P08037"/>
    </source>
</evidence>
<evidence type="ECO:0000250" key="3">
    <source>
        <dbReference type="UniProtKB" id="P15291"/>
    </source>
</evidence>
<evidence type="ECO:0000255" key="4"/>
<evidence type="ECO:0000256" key="5">
    <source>
        <dbReference type="SAM" id="MobiDB-lite"/>
    </source>
</evidence>
<evidence type="ECO:0000269" key="6">
    <source>
    </source>
</evidence>
<evidence type="ECO:0000269" key="7">
    <source>
    </source>
</evidence>
<evidence type="ECO:0000269" key="8">
    <source>
    </source>
</evidence>
<evidence type="ECO:0000269" key="9">
    <source>
    </source>
</evidence>
<evidence type="ECO:0000305" key="10"/>
<evidence type="ECO:0000312" key="11">
    <source>
        <dbReference type="MGI" id="MGI:95705"/>
    </source>
</evidence>
<accession>P15535</accession>
<name>B4GT1_MOUSE</name>
<gene>
    <name evidence="11" type="primary">B4galt1</name>
    <name type="synonym">Ggtb</name>
    <name type="synonym">Ggtb2</name>
</gene>
<feature type="chain" id="PRO_0000012280" description="Beta-1,4-galactosyltransferase 1">
    <location>
        <begin position="1"/>
        <end position="399"/>
    </location>
</feature>
<feature type="chain" id="PRO_0000296230" description="Processed beta-1,4-galactosyltransferase 1">
    <location>
        <begin status="unknown"/>
        <end position="398"/>
    </location>
</feature>
<feature type="topological domain" description="Cytoplasmic" evidence="4">
    <location>
        <begin position="1"/>
        <end position="24"/>
    </location>
</feature>
<feature type="transmembrane region" description="Helical; Signal-anchor for type II membrane protein" evidence="4">
    <location>
        <begin position="25"/>
        <end position="44"/>
    </location>
</feature>
<feature type="topological domain" description="Lumenal" evidence="4">
    <location>
        <begin position="45"/>
        <end position="399"/>
    </location>
</feature>
<feature type="region of interest" description="Disordered" evidence="5">
    <location>
        <begin position="61"/>
        <end position="113"/>
    </location>
</feature>
<feature type="compositionally biased region" description="Pro residues" evidence="5">
    <location>
        <begin position="82"/>
        <end position="95"/>
    </location>
</feature>
<feature type="binding site" evidence="1">
    <location>
        <begin position="184"/>
        <end position="188"/>
    </location>
    <ligand>
        <name>UDP-alpha-D-galactose</name>
        <dbReference type="ChEBI" id="CHEBI:66914"/>
    </ligand>
</feature>
<feature type="binding site" evidence="1">
    <location>
        <begin position="223"/>
        <end position="225"/>
    </location>
    <ligand>
        <name>UDP-alpha-D-galactose</name>
        <dbReference type="ChEBI" id="CHEBI:66914"/>
    </ligand>
</feature>
<feature type="binding site" evidence="1">
    <location>
        <begin position="250"/>
        <end position="251"/>
    </location>
    <ligand>
        <name>UDP-alpha-D-galactose</name>
        <dbReference type="ChEBI" id="CHEBI:66914"/>
    </ligand>
</feature>
<feature type="binding site" evidence="1">
    <location>
        <position position="251"/>
    </location>
    <ligand>
        <name>Mn(2+)</name>
        <dbReference type="ChEBI" id="CHEBI:29035"/>
    </ligand>
</feature>
<feature type="binding site" evidence="1">
    <location>
        <position position="311"/>
    </location>
    <ligand>
        <name>UDP-alpha-D-galactose</name>
        <dbReference type="ChEBI" id="CHEBI:66914"/>
    </ligand>
</feature>
<feature type="binding site" evidence="1">
    <location>
        <begin position="313"/>
        <end position="316"/>
    </location>
    <ligand>
        <name>N-acetyl-D-glucosamine</name>
        <dbReference type="ChEBI" id="CHEBI:506227"/>
    </ligand>
</feature>
<feature type="binding site" evidence="1">
    <location>
        <begin position="344"/>
        <end position="346"/>
    </location>
    <ligand>
        <name>UDP-alpha-D-galactose</name>
        <dbReference type="ChEBI" id="CHEBI:66914"/>
    </ligand>
</feature>
<feature type="binding site" evidence="1">
    <location>
        <position position="344"/>
    </location>
    <ligand>
        <name>Mn(2+)</name>
        <dbReference type="ChEBI" id="CHEBI:29035"/>
    </ligand>
</feature>
<feature type="binding site" evidence="1">
    <location>
        <position position="356"/>
    </location>
    <ligand>
        <name>N-acetyl-D-glucosamine</name>
        <dbReference type="ChEBI" id="CHEBI:506227"/>
    </ligand>
</feature>
<feature type="glycosylation site" description="N-linked (GlcNAc...) asparagine" evidence="4">
    <location>
        <position position="113"/>
    </location>
</feature>
<feature type="disulfide bond" evidence="1">
    <location>
        <begin position="131"/>
        <end position="173"/>
    </location>
</feature>
<feature type="disulfide bond" evidence="1">
    <location>
        <begin position="244"/>
        <end position="263"/>
    </location>
</feature>
<feature type="splice variant" id="VSP_018803" description="In isoform Short." evidence="10">
    <location>
        <begin position="1"/>
        <end position="13"/>
    </location>
</feature>
<feature type="mutagenesis site" description="Homozygous and heterozygous mice show lower body weight compared with wild-type animals and reduced LDL-cholesterol and plasma fibrinogen levels." evidence="9">
    <original>N</original>
    <variation>S</variation>
    <location>
        <position position="353"/>
    </location>
</feature>
<keyword id="KW-0024">Alternative initiation</keyword>
<keyword id="KW-1003">Cell membrane</keyword>
<keyword id="KW-0966">Cell projection</keyword>
<keyword id="KW-1015">Disulfide bond</keyword>
<keyword id="KW-0325">Glycoprotein</keyword>
<keyword id="KW-0328">Glycosyltransferase</keyword>
<keyword id="KW-0333">Golgi apparatus</keyword>
<keyword id="KW-0443">Lipid metabolism</keyword>
<keyword id="KW-0464">Manganese</keyword>
<keyword id="KW-0472">Membrane</keyword>
<keyword id="KW-0479">Metal-binding</keyword>
<keyword id="KW-1185">Reference proteome</keyword>
<keyword id="KW-0964">Secreted</keyword>
<keyword id="KW-0735">Signal-anchor</keyword>
<keyword id="KW-0808">Transferase</keyword>
<keyword id="KW-0812">Transmembrane</keyword>
<keyword id="KW-1133">Transmembrane helix</keyword>
<protein>
    <recommendedName>
        <fullName evidence="10">Beta-1,4-galactosyltransferase 1</fullName>
        <shortName>Beta-1,4-GalTase 1</shortName>
        <shortName>Beta4Gal-T1</shortName>
        <shortName>b4Gal-T1</shortName>
        <ecNumber>2.4.1.-</ecNumber>
    </recommendedName>
    <alternativeName>
        <fullName>Beta-N-acetylglucosaminyl-glycolipid beta-1,4-galactosyltransferase</fullName>
    </alternativeName>
    <alternativeName>
        <fullName>Beta-N-acetylglucosaminylglycopeptide beta-1,4-galactosyltransferase</fullName>
        <ecNumber>2.4.1.38</ecNumber>
    </alternativeName>
    <alternativeName>
        <fullName>Lactose synthase A protein</fullName>
        <ecNumber>2.4.1.22</ecNumber>
    </alternativeName>
    <alternativeName>
        <fullName>N-acetyllactosamine synthase</fullName>
        <ecNumber>2.4.1.90</ecNumber>
    </alternativeName>
    <alternativeName>
        <fullName>Nal synthase</fullName>
    </alternativeName>
    <alternativeName>
        <fullName>Neolactotriaosylceramide beta-1,4-galactosyltransferase</fullName>
        <ecNumber evidence="2">2.4.1.275</ecNumber>
    </alternativeName>
    <alternativeName>
        <fullName>UDP-Gal:beta-GlcNAc beta-1,4-galactosyltransferase 1</fullName>
    </alternativeName>
    <alternativeName>
        <fullName>UDP-galactose:beta-N-acetylglucosamine beta-1,4-galactosyltransferase 1</fullName>
    </alternativeName>
    <component>
        <recommendedName>
            <fullName evidence="10">Processed beta-1,4-galactosyltransferase 1</fullName>
        </recommendedName>
    </component>
</protein>
<dbReference type="EC" id="2.4.1.-"/>
<dbReference type="EC" id="2.4.1.38"/>
<dbReference type="EC" id="2.4.1.22"/>
<dbReference type="EC" id="2.4.1.90"/>
<dbReference type="EC" id="2.4.1.275" evidence="2"/>
<dbReference type="EMBL" id="J03880">
    <property type="protein sequence ID" value="AAA37297.1"/>
    <property type="molecule type" value="mRNA"/>
</dbReference>
<dbReference type="EMBL" id="D00314">
    <property type="protein sequence ID" value="BAA00216.1"/>
    <property type="molecule type" value="mRNA"/>
</dbReference>
<dbReference type="EMBL" id="M27922">
    <property type="protein sequence ID" value="AAA58745.1"/>
    <property type="molecule type" value="Genomic_DNA"/>
</dbReference>
<dbReference type="EMBL" id="M27917">
    <property type="protein sequence ID" value="AAA58745.1"/>
    <property type="status" value="JOINED"/>
    <property type="molecule type" value="Genomic_DNA"/>
</dbReference>
<dbReference type="EMBL" id="M27918">
    <property type="protein sequence ID" value="AAA58745.1"/>
    <property type="status" value="JOINED"/>
    <property type="molecule type" value="Genomic_DNA"/>
</dbReference>
<dbReference type="EMBL" id="M27919">
    <property type="protein sequence ID" value="AAA58745.1"/>
    <property type="status" value="JOINED"/>
    <property type="molecule type" value="Genomic_DNA"/>
</dbReference>
<dbReference type="EMBL" id="M27920">
    <property type="protein sequence ID" value="AAA58745.1"/>
    <property type="status" value="JOINED"/>
    <property type="molecule type" value="Genomic_DNA"/>
</dbReference>
<dbReference type="EMBL" id="M27921">
    <property type="protein sequence ID" value="AAA58745.1"/>
    <property type="status" value="JOINED"/>
    <property type="molecule type" value="Genomic_DNA"/>
</dbReference>
<dbReference type="EMBL" id="M27922">
    <property type="protein sequence ID" value="AAA58744.1"/>
    <property type="molecule type" value="Genomic_DNA"/>
</dbReference>
<dbReference type="EMBL" id="M27917">
    <property type="protein sequence ID" value="AAA58744.1"/>
    <property type="status" value="JOINED"/>
    <property type="molecule type" value="Genomic_DNA"/>
</dbReference>
<dbReference type="EMBL" id="M27918">
    <property type="protein sequence ID" value="AAA58744.1"/>
    <property type="status" value="JOINED"/>
    <property type="molecule type" value="Genomic_DNA"/>
</dbReference>
<dbReference type="EMBL" id="M27919">
    <property type="protein sequence ID" value="AAA58744.1"/>
    <property type="status" value="JOINED"/>
    <property type="molecule type" value="Genomic_DNA"/>
</dbReference>
<dbReference type="EMBL" id="M27920">
    <property type="protein sequence ID" value="AAA58744.1"/>
    <property type="status" value="JOINED"/>
    <property type="molecule type" value="Genomic_DNA"/>
</dbReference>
<dbReference type="EMBL" id="M27921">
    <property type="protein sequence ID" value="AAA58744.1"/>
    <property type="status" value="JOINED"/>
    <property type="molecule type" value="Genomic_DNA"/>
</dbReference>
<dbReference type="EMBL" id="BC053006">
    <property type="protein sequence ID" value="AAH53006.1"/>
    <property type="molecule type" value="mRNA"/>
</dbReference>
<dbReference type="EMBL" id="M36289">
    <property type="protein sequence ID" value="AAA37294.1"/>
    <property type="molecule type" value="mRNA"/>
</dbReference>
<dbReference type="EMBL" id="L16840">
    <property type="protein sequence ID" value="AAA62340.1"/>
    <property type="molecule type" value="mRNA"/>
</dbReference>
<dbReference type="CCDS" id="CCDS18051.1">
    <molecule id="P15535-1"/>
</dbReference>
<dbReference type="PIR" id="A33396">
    <property type="entry name" value="A33396"/>
</dbReference>
<dbReference type="RefSeq" id="NP_001365448.1">
    <molecule id="P15535-2"/>
    <property type="nucleotide sequence ID" value="NM_001378519.2"/>
</dbReference>
<dbReference type="RefSeq" id="NP_071641.1">
    <molecule id="P15535-1"/>
    <property type="nucleotide sequence ID" value="NM_022305.6"/>
</dbReference>
<dbReference type="SMR" id="P15535"/>
<dbReference type="BioGRID" id="199912">
    <property type="interactions" value="13"/>
</dbReference>
<dbReference type="FunCoup" id="P15535">
    <property type="interactions" value="829"/>
</dbReference>
<dbReference type="IntAct" id="P15535">
    <property type="interactions" value="11"/>
</dbReference>
<dbReference type="STRING" id="10090.ENSMUSP00000030121"/>
<dbReference type="CAZy" id="GT7">
    <property type="family name" value="Glycosyltransferase Family 7"/>
</dbReference>
<dbReference type="GlyCosmos" id="P15535">
    <property type="glycosylation" value="1 site, No reported glycans"/>
</dbReference>
<dbReference type="GlyGen" id="P15535">
    <property type="glycosylation" value="3 sites, 1 O-linked glycan (1 site)"/>
</dbReference>
<dbReference type="PhosphoSitePlus" id="P15535"/>
<dbReference type="SwissPalm" id="P15535"/>
<dbReference type="CPTAC" id="non-CPTAC-3561"/>
<dbReference type="PaxDb" id="10090-ENSMUSP00000030121"/>
<dbReference type="PeptideAtlas" id="P15535"/>
<dbReference type="ProteomicsDB" id="273458">
    <molecule id="P15535-1"/>
</dbReference>
<dbReference type="ProteomicsDB" id="273459">
    <molecule id="P15535-2"/>
</dbReference>
<dbReference type="Pumba" id="P15535"/>
<dbReference type="Antibodypedia" id="2256">
    <property type="antibodies" value="177 antibodies from 28 providers"/>
</dbReference>
<dbReference type="DNASU" id="14595"/>
<dbReference type="Ensembl" id="ENSMUST00000030121.13">
    <molecule id="P15535-1"/>
    <property type="protein sequence ID" value="ENSMUSP00000030121.7"/>
    <property type="gene ID" value="ENSMUSG00000028413.14"/>
</dbReference>
<dbReference type="GeneID" id="14595"/>
<dbReference type="KEGG" id="mmu:14595"/>
<dbReference type="UCSC" id="uc008shw.2">
    <molecule id="P15535-1"/>
    <property type="organism name" value="mouse"/>
</dbReference>
<dbReference type="AGR" id="MGI:95705"/>
<dbReference type="CTD" id="2683"/>
<dbReference type="MGI" id="MGI:95705">
    <property type="gene designation" value="B4galt1"/>
</dbReference>
<dbReference type="VEuPathDB" id="HostDB:ENSMUSG00000028413"/>
<dbReference type="eggNOG" id="KOG3916">
    <property type="taxonomic scope" value="Eukaryota"/>
</dbReference>
<dbReference type="GeneTree" id="ENSGT00940000155244"/>
<dbReference type="HOGENOM" id="CLU_044391_0_0_1"/>
<dbReference type="InParanoid" id="P15535"/>
<dbReference type="OMA" id="IYKCYDQ"/>
<dbReference type="OrthoDB" id="10016069at2759"/>
<dbReference type="PhylomeDB" id="P15535"/>
<dbReference type="TreeFam" id="TF312834"/>
<dbReference type="Reactome" id="R-MMU-2022854">
    <property type="pathway name" value="Keratan sulfate biosynthesis"/>
</dbReference>
<dbReference type="Reactome" id="R-MMU-2534343">
    <property type="pathway name" value="Interaction With Cumulus Cells And The Zona Pellucida"/>
</dbReference>
<dbReference type="Reactome" id="R-MMU-5653890">
    <property type="pathway name" value="Lactose synthesis"/>
</dbReference>
<dbReference type="Reactome" id="R-MMU-6798695">
    <property type="pathway name" value="Neutrophil degranulation"/>
</dbReference>
<dbReference type="Reactome" id="R-MMU-975577">
    <property type="pathway name" value="N-Glycan antennae elongation"/>
</dbReference>
<dbReference type="UniPathway" id="UPA00378"/>
<dbReference type="BioGRID-ORCS" id="14595">
    <property type="hits" value="9 hits in 84 CRISPR screens"/>
</dbReference>
<dbReference type="ChiTaRS" id="B4galt1">
    <property type="organism name" value="mouse"/>
</dbReference>
<dbReference type="PRO" id="PR:P15535"/>
<dbReference type="Proteomes" id="UP000000589">
    <property type="component" value="Chromosome 4"/>
</dbReference>
<dbReference type="RNAct" id="P15535">
    <property type="molecule type" value="protein"/>
</dbReference>
<dbReference type="Bgee" id="ENSMUSG00000028413">
    <property type="expression patterns" value="Expressed in lacrimal gland and 232 other cell types or tissues"/>
</dbReference>
<dbReference type="ExpressionAtlas" id="P15535">
    <property type="expression patterns" value="baseline and differential"/>
</dbReference>
<dbReference type="GO" id="GO:0016323">
    <property type="term" value="C:basolateral plasma membrane"/>
    <property type="evidence" value="ECO:0007669"/>
    <property type="project" value="Ensembl"/>
</dbReference>
<dbReference type="GO" id="GO:0031526">
    <property type="term" value="C:brush border membrane"/>
    <property type="evidence" value="ECO:0007669"/>
    <property type="project" value="Ensembl"/>
</dbReference>
<dbReference type="GO" id="GO:0009986">
    <property type="term" value="C:cell surface"/>
    <property type="evidence" value="ECO:0000314"/>
    <property type="project" value="MGI"/>
</dbReference>
<dbReference type="GO" id="GO:0030057">
    <property type="term" value="C:desmosome"/>
    <property type="evidence" value="ECO:0007669"/>
    <property type="project" value="Ensembl"/>
</dbReference>
<dbReference type="GO" id="GO:0009897">
    <property type="term" value="C:external side of plasma membrane"/>
    <property type="evidence" value="ECO:0007669"/>
    <property type="project" value="Ensembl"/>
</dbReference>
<dbReference type="GO" id="GO:0005576">
    <property type="term" value="C:extracellular region"/>
    <property type="evidence" value="ECO:0007669"/>
    <property type="project" value="UniProtKB-SubCell"/>
</dbReference>
<dbReference type="GO" id="GO:0030175">
    <property type="term" value="C:filopodium"/>
    <property type="evidence" value="ECO:0007669"/>
    <property type="project" value="UniProtKB-SubCell"/>
</dbReference>
<dbReference type="GO" id="GO:0005794">
    <property type="term" value="C:Golgi apparatus"/>
    <property type="evidence" value="ECO:0000314"/>
    <property type="project" value="MGI"/>
</dbReference>
<dbReference type="GO" id="GO:0032580">
    <property type="term" value="C:Golgi cisterna membrane"/>
    <property type="evidence" value="ECO:0007669"/>
    <property type="project" value="UniProtKB-SubCell"/>
</dbReference>
<dbReference type="GO" id="GO:0000138">
    <property type="term" value="C:Golgi trans cisterna"/>
    <property type="evidence" value="ECO:0007669"/>
    <property type="project" value="Ensembl"/>
</dbReference>
<dbReference type="GO" id="GO:0005886">
    <property type="term" value="C:plasma membrane"/>
    <property type="evidence" value="ECO:0000314"/>
    <property type="project" value="MGI"/>
</dbReference>
<dbReference type="GO" id="GO:0032991">
    <property type="term" value="C:protein-containing complex"/>
    <property type="evidence" value="ECO:0000314"/>
    <property type="project" value="MGI"/>
</dbReference>
<dbReference type="GO" id="GO:0003831">
    <property type="term" value="F:beta-N-acetylglucosaminylglycopeptide beta-1,4-galactosyltransferase activity"/>
    <property type="evidence" value="ECO:0000314"/>
    <property type="project" value="MGI"/>
</dbReference>
<dbReference type="GO" id="GO:0008092">
    <property type="term" value="F:cytoskeletal protein binding"/>
    <property type="evidence" value="ECO:0000314"/>
    <property type="project" value="MGI"/>
</dbReference>
<dbReference type="GO" id="GO:0008378">
    <property type="term" value="F:galactosyltransferase activity"/>
    <property type="evidence" value="ECO:0000314"/>
    <property type="project" value="MGI"/>
</dbReference>
<dbReference type="GO" id="GO:0004461">
    <property type="term" value="F:lactose synthase activity"/>
    <property type="evidence" value="ECO:0000315"/>
    <property type="project" value="MGI"/>
</dbReference>
<dbReference type="GO" id="GO:0098638">
    <property type="term" value="F:laminin binding involved in cell-matrix adhesion"/>
    <property type="evidence" value="ECO:0000315"/>
    <property type="project" value="MGI"/>
</dbReference>
<dbReference type="GO" id="GO:0030145">
    <property type="term" value="F:manganese ion binding"/>
    <property type="evidence" value="ECO:0000250"/>
    <property type="project" value="UniProtKB"/>
</dbReference>
<dbReference type="GO" id="GO:0003945">
    <property type="term" value="F:N-acetyllactosamine synthase activity"/>
    <property type="evidence" value="ECO:0007669"/>
    <property type="project" value="UniProtKB-EC"/>
</dbReference>
<dbReference type="GO" id="GO:0002526">
    <property type="term" value="P:acute inflammatory response"/>
    <property type="evidence" value="ECO:0000315"/>
    <property type="project" value="MGI"/>
</dbReference>
<dbReference type="GO" id="GO:0060055">
    <property type="term" value="P:angiogenesis involved in wound healing"/>
    <property type="evidence" value="ECO:0000315"/>
    <property type="project" value="MGI"/>
</dbReference>
<dbReference type="GO" id="GO:0060057">
    <property type="term" value="P:apoptotic process involved in mammary gland involution"/>
    <property type="evidence" value="ECO:0000315"/>
    <property type="project" value="MGI"/>
</dbReference>
<dbReference type="GO" id="GO:0007339">
    <property type="term" value="P:binding of sperm to zona pellucida"/>
    <property type="evidence" value="ECO:0000315"/>
    <property type="project" value="MGI"/>
</dbReference>
<dbReference type="GO" id="GO:0048754">
    <property type="term" value="P:branching morphogenesis of an epithelial tube"/>
    <property type="evidence" value="ECO:0000315"/>
    <property type="project" value="MGI"/>
</dbReference>
<dbReference type="GO" id="GO:0007155">
    <property type="term" value="P:cell adhesion"/>
    <property type="evidence" value="ECO:0000316"/>
    <property type="project" value="MGI"/>
</dbReference>
<dbReference type="GO" id="GO:0008283">
    <property type="term" value="P:cell population proliferation"/>
    <property type="evidence" value="ECO:0000315"/>
    <property type="project" value="MGI"/>
</dbReference>
<dbReference type="GO" id="GO:0007160">
    <property type="term" value="P:cell-matrix adhesion"/>
    <property type="evidence" value="ECO:0000315"/>
    <property type="project" value="MGI"/>
</dbReference>
<dbReference type="GO" id="GO:0045136">
    <property type="term" value="P:development of secondary sexual characteristics"/>
    <property type="evidence" value="ECO:0000315"/>
    <property type="project" value="MGI"/>
</dbReference>
<dbReference type="GO" id="GO:0002064">
    <property type="term" value="P:epithelial cell development"/>
    <property type="evidence" value="ECO:0000315"/>
    <property type="project" value="MGI"/>
</dbReference>
<dbReference type="GO" id="GO:0050673">
    <property type="term" value="P:epithelial cell proliferation"/>
    <property type="evidence" value="ECO:0000315"/>
    <property type="project" value="MGI"/>
</dbReference>
<dbReference type="GO" id="GO:0030198">
    <property type="term" value="P:extracellular matrix organization"/>
    <property type="evidence" value="ECO:0000315"/>
    <property type="project" value="MGI"/>
</dbReference>
<dbReference type="GO" id="GO:0006012">
    <property type="term" value="P:galactose metabolic process"/>
    <property type="evidence" value="ECO:0000314"/>
    <property type="project" value="MGI"/>
</dbReference>
<dbReference type="GO" id="GO:0009101">
    <property type="term" value="P:glycoprotein biosynthetic process"/>
    <property type="evidence" value="ECO:0000315"/>
    <property type="project" value="MGI"/>
</dbReference>
<dbReference type="GO" id="GO:0005989">
    <property type="term" value="P:lactose biosynthetic process"/>
    <property type="evidence" value="ECO:0000315"/>
    <property type="project" value="MGI"/>
</dbReference>
<dbReference type="GO" id="GO:0006629">
    <property type="term" value="P:lipid metabolic process"/>
    <property type="evidence" value="ECO:0000250"/>
    <property type="project" value="UniProtKB"/>
</dbReference>
<dbReference type="GO" id="GO:1905517">
    <property type="term" value="P:macrophage migration"/>
    <property type="evidence" value="ECO:0000315"/>
    <property type="project" value="MGI"/>
</dbReference>
<dbReference type="GO" id="GO:0030879">
    <property type="term" value="P:mammary gland development"/>
    <property type="evidence" value="ECO:0000315"/>
    <property type="project" value="MGI"/>
</dbReference>
<dbReference type="GO" id="GO:0008285">
    <property type="term" value="P:negative regulation of cell population proliferation"/>
    <property type="evidence" value="ECO:0000316"/>
    <property type="project" value="MGI"/>
</dbReference>
<dbReference type="GO" id="GO:0050680">
    <property type="term" value="P:negative regulation of epithelial cell proliferation"/>
    <property type="evidence" value="ECO:0000315"/>
    <property type="project" value="MGI"/>
</dbReference>
<dbReference type="GO" id="GO:0009312">
    <property type="term" value="P:oligosaccharide biosynthetic process"/>
    <property type="evidence" value="ECO:0000314"/>
    <property type="project" value="MGI"/>
</dbReference>
<dbReference type="GO" id="GO:0007341">
    <property type="term" value="P:penetration of zona pellucida"/>
    <property type="evidence" value="ECO:0000315"/>
    <property type="project" value="MGI"/>
</dbReference>
<dbReference type="GO" id="GO:0043065">
    <property type="term" value="P:positive regulation of apoptotic process"/>
    <property type="evidence" value="ECO:0000315"/>
    <property type="project" value="MGI"/>
</dbReference>
<dbReference type="GO" id="GO:0060058">
    <property type="term" value="P:positive regulation of apoptotic process involved in mammary gland involution"/>
    <property type="evidence" value="ECO:0000315"/>
    <property type="project" value="MGI"/>
</dbReference>
<dbReference type="GO" id="GO:0061755">
    <property type="term" value="P:positive regulation of circulating fibrinogen levels"/>
    <property type="evidence" value="ECO:0000250"/>
    <property type="project" value="UniProtKB"/>
</dbReference>
<dbReference type="GO" id="GO:0060054">
    <property type="term" value="P:positive regulation of epithelial cell proliferation involved in wound healing"/>
    <property type="evidence" value="ECO:0000315"/>
    <property type="project" value="MGI"/>
</dbReference>
<dbReference type="GO" id="GO:0006486">
    <property type="term" value="P:protein glycosylation"/>
    <property type="evidence" value="ECO:0000315"/>
    <property type="project" value="MGI"/>
</dbReference>
<dbReference type="GO" id="GO:0006487">
    <property type="term" value="P:protein N-linked glycosylation"/>
    <property type="evidence" value="ECO:0000250"/>
    <property type="project" value="UniProtKB"/>
</dbReference>
<dbReference type="GO" id="GO:0060046">
    <property type="term" value="P:regulation of acrosome reaction"/>
    <property type="evidence" value="ECO:0000315"/>
    <property type="project" value="MGI"/>
</dbReference>
<dbReference type="GO" id="GO:0030334">
    <property type="term" value="P:regulation of cell migration"/>
    <property type="evidence" value="ECO:0000314"/>
    <property type="project" value="MGI"/>
</dbReference>
<dbReference type="GO" id="GO:0042127">
    <property type="term" value="P:regulation of cell population proliferation"/>
    <property type="evidence" value="ECO:0000315"/>
    <property type="project" value="MGI"/>
</dbReference>
<dbReference type="GO" id="GO:0042060">
    <property type="term" value="P:wound healing"/>
    <property type="evidence" value="ECO:0000315"/>
    <property type="project" value="MGI"/>
</dbReference>
<dbReference type="CDD" id="cd00899">
    <property type="entry name" value="b4GalT"/>
    <property type="match status" value="1"/>
</dbReference>
<dbReference type="FunFam" id="3.90.550.10:FF:000028">
    <property type="entry name" value="beta-1,4-galactosyltransferase 1"/>
    <property type="match status" value="1"/>
</dbReference>
<dbReference type="Gene3D" id="3.90.550.10">
    <property type="entry name" value="Spore Coat Polysaccharide Biosynthesis Protein SpsA, Chain A"/>
    <property type="match status" value="1"/>
</dbReference>
<dbReference type="InterPro" id="IPR003859">
    <property type="entry name" value="Galactosyl_T"/>
</dbReference>
<dbReference type="InterPro" id="IPR027791">
    <property type="entry name" value="Galactosyl_T_C"/>
</dbReference>
<dbReference type="InterPro" id="IPR027995">
    <property type="entry name" value="Galactosyl_T_N"/>
</dbReference>
<dbReference type="InterPro" id="IPR029044">
    <property type="entry name" value="Nucleotide-diphossugar_trans"/>
</dbReference>
<dbReference type="PANTHER" id="PTHR19300">
    <property type="entry name" value="BETA-1,4-GALACTOSYLTRANSFERASE"/>
    <property type="match status" value="1"/>
</dbReference>
<dbReference type="PANTHER" id="PTHR19300:SF5">
    <property type="entry name" value="BETA-1,4-GALACTOSYLTRANSFERASE 1"/>
    <property type="match status" value="1"/>
</dbReference>
<dbReference type="Pfam" id="PF02709">
    <property type="entry name" value="Glyco_transf_7C"/>
    <property type="match status" value="1"/>
</dbReference>
<dbReference type="Pfam" id="PF13733">
    <property type="entry name" value="Glyco_transf_7N"/>
    <property type="match status" value="1"/>
</dbReference>
<dbReference type="PRINTS" id="PR02050">
    <property type="entry name" value="B14GALTRFASE"/>
</dbReference>
<dbReference type="SUPFAM" id="SSF53448">
    <property type="entry name" value="Nucleotide-diphospho-sugar transferases"/>
    <property type="match status" value="1"/>
</dbReference>
<reference key="1">
    <citation type="journal article" date="1988" name="J. Biol. Chem.">
        <title>Characterization of the full length cDNA for murine beta-1,4-galactosyltransferase. Novel features at the 5'-end predict two translational start sites at two in-frame AUGs.</title>
        <authorList>
            <person name="Shaper N.L."/>
            <person name="Hollis G.F."/>
            <person name="Douglas J.G."/>
            <person name="Kirsch I.R."/>
            <person name="Shaper J.H."/>
        </authorList>
    </citation>
    <scope>NUCLEOTIDE SEQUENCE [MRNA]</scope>
    <source>
        <strain>BALB/cJ</strain>
    </source>
</reference>
<reference key="2">
    <citation type="journal article" date="1990" name="Proc. Natl. Acad. Sci. U.S.A.">
        <title>Murine beta 1,4-galactosyltransferase: both the amounts and structure of the mRNA are regulated during spermatogenesis.</title>
        <authorList>
            <person name="Shaper N.L."/>
            <person name="Wright W.W."/>
            <person name="Sharper J.H."/>
        </authorList>
    </citation>
    <scope>NUCLEOTIDE SEQUENCE [MRNA]</scope>
</reference>
<reference key="3">
    <citation type="journal article" date="1989" name="Biochem. Biophys. Res. Commun.">
        <title>Genomic structure of murine beta-1,4-galactosyltransferase.</title>
        <authorList>
            <person name="Hollis G.F."/>
            <person name="Douglas J.G."/>
            <person name="Shaper N.L."/>
            <person name="Shaper J.H."/>
            <person name="Stafford-Hollis J.M."/>
            <person name="Evans R.J."/>
            <person name="Kirsch I.R."/>
        </authorList>
    </citation>
    <scope>NUCLEOTIDE SEQUENCE [GENOMIC DNA]</scope>
</reference>
<reference key="4">
    <citation type="journal article" date="1988" name="J. Biochem.">
        <title>Cloning and sequencing of a full-length cDNA of mouse N-acetylglucosamine (beta 1-4)galactosyltransferase.</title>
        <authorList>
            <person name="Nakazawa K."/>
            <person name="Ando T."/>
            <person name="Kimura T."/>
            <person name="Narimatsu H."/>
        </authorList>
    </citation>
    <scope>NUCLEOTIDE SEQUENCE</scope>
</reference>
<reference key="5">
    <citation type="journal article" date="2004" name="Genome Res.">
        <title>The status, quality, and expansion of the NIH full-length cDNA project: the Mammalian Gene Collection (MGC).</title>
        <authorList>
            <consortium name="The MGC Project Team"/>
        </authorList>
    </citation>
    <scope>NUCLEOTIDE SEQUENCE [LARGE SCALE MRNA]</scope>
    <source>
        <strain>C57BL/6J</strain>
        <tissue>Brain</tissue>
    </source>
</reference>
<reference key="6">
    <citation type="journal article" date="1988" name="Biochimie">
        <title>Evidence for two forms of murine beta-1,4-galactosyltransferase based on cloning studies.</title>
        <authorList>
            <person name="Shaper J.H."/>
            <person name="Hollis G.F."/>
            <person name="Shaper N.L."/>
        </authorList>
    </citation>
    <scope>NUCLEOTIDE SEQUENCE OF 1-63</scope>
    <scope>SUBCELLULAR LOCATION (ISOFORM SHORT)</scope>
</reference>
<reference key="7">
    <citation type="journal article" date="1992" name="Glycobiology">
        <title>Murine beta 1,4-galactosyltransferase: round spermatid transcripts are characterized by an extended 5'-untranslated region.</title>
        <authorList>
            <person name="Harduin-Lepers A."/>
            <person name="Shaper N.L."/>
            <person name="Mahoney J.A."/>
            <person name="Shaper J.H."/>
        </authorList>
    </citation>
    <scope>NUCLEOTIDE SEQUENCE OF 1-20</scope>
    <source>
        <strain>BALB/cJ</strain>
    </source>
</reference>
<reference key="8">
    <citation type="journal article" date="1993" name="J. Biol. Chem.">
        <title>Characterization of two cis-regulatory regions in the murine beta 1,4-galactosyltransferase gene. Evidence for a negative regulatory element that controls initiation at the proximal site.</title>
        <authorList>
            <person name="Harduin-Lepers A."/>
            <person name="Shaper J.H."/>
            <person name="Shaper N.L."/>
        </authorList>
    </citation>
    <scope>NUCLEOTIDE SEQUENCE [MRNA] OF 1-20</scope>
    <source>
        <strain>BALB/cJ</strain>
    </source>
</reference>
<reference key="9">
    <citation type="journal article" date="2001" name="J. Neurochem.">
        <title>Differential gene expression of beta-1,4-galactosyltransferases I, II and V during mouse brain development.</title>
        <authorList>
            <person name="Nakamura N."/>
            <person name="Yamakawa N."/>
            <person name="Sato T."/>
            <person name="Tojo H."/>
            <person name="Tachi C."/>
            <person name="Furukawa K."/>
        </authorList>
    </citation>
    <scope>DEVELOPMENTAL STAGE</scope>
    <source>
        <strain>BALB/cJ</strain>
        <tissue>Brain</tissue>
    </source>
</reference>
<reference key="10">
    <citation type="journal article" date="2008" name="Stem Cells">
        <title>Characterization of a novel ubiquitin-conjugating enzyme that regulates beta1,4-galactosyltransferase-1 in embryonic stem cells.</title>
        <authorList>
            <person name="Wassler M.J."/>
            <person name="Shur B.D."/>
            <person name="Zhou W."/>
            <person name="Geng Y.J."/>
        </authorList>
    </citation>
    <scope>SUBCELLULAR LOCATION</scope>
    <scope>INTERACTION WITH UBE2Q1</scope>
</reference>
<reference key="11">
    <citation type="journal article" date="2010" name="Cell">
        <title>A tissue-specific atlas of mouse protein phosphorylation and expression.</title>
        <authorList>
            <person name="Huttlin E.L."/>
            <person name="Jedrychowski M.P."/>
            <person name="Elias J.E."/>
            <person name="Goswami T."/>
            <person name="Rad R."/>
            <person name="Beausoleil S.A."/>
            <person name="Villen J."/>
            <person name="Haas W."/>
            <person name="Sowa M.E."/>
            <person name="Gygi S.P."/>
        </authorList>
    </citation>
    <scope>IDENTIFICATION BY MASS SPECTROMETRY [LARGE SCALE ANALYSIS]</scope>
    <source>
        <tissue>Pancreas</tissue>
        <tissue>Spleen</tissue>
    </source>
</reference>
<reference key="12">
    <citation type="journal article" date="2021" name="Science">
        <title>Genetic and functional evidence links a missense variant in B4GALT1 to lower LDL and fibrinogen.</title>
        <authorList>
            <consortium name="Regeneron Genetics Center Collaboration"/>
            <person name="Montasser M.E."/>
            <person name="Van Hout C.V."/>
            <person name="Miloscio L."/>
            <person name="Howard A.D."/>
            <person name="Rosenberg A."/>
            <person name="Callaway M."/>
            <person name="Shen B."/>
            <person name="Li N."/>
            <person name="Locke A.E."/>
            <person name="Verweij N."/>
            <person name="De T."/>
            <person name="Ferreira M.A."/>
            <person name="Lotta L.A."/>
            <person name="Baras A."/>
            <person name="Daly T.J."/>
            <person name="Hartford S.A."/>
            <person name="Lin W."/>
            <person name="Mao Y."/>
            <person name="Ye B."/>
            <person name="White D."/>
            <person name="Gong G."/>
            <person name="Perry J.A."/>
            <person name="Ryan K.A."/>
            <person name="Fang Q."/>
            <person name="Tzoneva G."/>
            <person name="Pefanis E."/>
            <person name="Hunt C."/>
            <person name="Tang Y."/>
            <person name="Lee L."/>
            <person name="Sztalryd-Woodle C."/>
            <person name="Mitchell B.D."/>
            <person name="Healy M."/>
            <person name="Streeten E.A."/>
            <person name="Taylor S.I."/>
            <person name="O'Connell J.R."/>
            <person name="Economides A.N."/>
            <person name="Della Gatta G."/>
            <person name="Shuldiner A.R."/>
        </authorList>
    </citation>
    <scope>MUTAGENESIS OF ASN-353</scope>
</reference>
<sequence length="399" mass="44411">MRFREQFLGGSAAMPGATLQRACRLLVAVCALHLGVTLVYYLSGRDLSRLPQLVGVSSTLQGGTNGAAASKQPPGEQRPRGARPPPPLGVSPKPRPGLDSSPGAASGPGLKSNLSSLPVPTTTGLLSLPACPEESPLLVGPMLIDFNIAVDLELLAKKNPEIKTGGRYSPKDCVSPHKVAIIIPFRNRQEHLKYWLYYLHPILQRQQLDYGIYVINQAGDTMFNRAKLLNIGFQEALKDYDYNCFVFSDVDLIPMDDRNAYRCFSQPRHISVAMDKFGFSLPYVQYFGGVSALSKQQFLAINGFPNNYWGWGGEDDDIFNRLVHKGMSISRPNAVVGRCRMIRHSRDKKNEPNPQRFDRIAHTKETMRFDGLNSLTYKVLDVQRYPLYTQITVDIGTPR</sequence>
<proteinExistence type="evidence at protein level"/>